<feature type="chain" id="PRO_0000371533" description="Mannitol-1-phosphate 5-dehydrogenase">
    <location>
        <begin position="1"/>
        <end position="389"/>
    </location>
</feature>
<feature type="active site" evidence="1">
    <location>
        <position position="214"/>
    </location>
</feature>
<feature type="binding site" evidence="1">
    <location>
        <begin position="5"/>
        <end position="16"/>
    </location>
    <ligand>
        <name>NAD(+)</name>
        <dbReference type="ChEBI" id="CHEBI:57540"/>
    </ligand>
</feature>
<name>MTLD_TALMQ</name>
<protein>
    <recommendedName>
        <fullName>Mannitol-1-phosphate 5-dehydrogenase</fullName>
        <shortName>M1PDH</shortName>
        <shortName>MPD</shortName>
        <shortName>MPDH</shortName>
        <ecNumber>1.1.1.17</ecNumber>
    </recommendedName>
</protein>
<evidence type="ECO:0000250" key="1"/>
<evidence type="ECO:0000305" key="2"/>
<sequence>MGKKAIQFGGGNIGRGFVAEFLHESGYEVVFIDVVPQVIESLNKNKSYEVTEISEEGEKTKTITNYRALSSKTQEPEVVKEIATADVVTCAVGPNILKFIAPVIAKGIDAREEGLPPIAVIACENAINATDALRGYIEEHLDKSRLDTLPKRARFANSAIDRIVPTQPEHAGLNVRIEKFYEWAVEQTPFGEYGHPDISAIHWVDHLEPYIERKLFTVNTGHATAAYYGYKAGKKTIHEAMAEETIHKAVHAALDETASLIISKHEITEQEQKEYVKTIISRISNPYLEDVVERVGRAPLRKLSRKERFIGPAAQLAERGMKFDALLGSIEKALQFQNVKGDDESTELAKILSEKTAAEATQQITGLETDHPLYQPVLKVVEKVQSVSK</sequence>
<comment type="function">
    <text evidence="1">Catalyzes the NAD(H)-dependent interconversion of D-fructose 6-phosphate and D-mannitol 1-phosphate in the mannitol metabolic pathway.</text>
</comment>
<comment type="catalytic activity">
    <reaction>
        <text>D-mannitol 1-phosphate + NAD(+) = beta-D-fructose 6-phosphate + NADH + H(+)</text>
        <dbReference type="Rhea" id="RHEA:19661"/>
        <dbReference type="ChEBI" id="CHEBI:15378"/>
        <dbReference type="ChEBI" id="CHEBI:57540"/>
        <dbReference type="ChEBI" id="CHEBI:57634"/>
        <dbReference type="ChEBI" id="CHEBI:57945"/>
        <dbReference type="ChEBI" id="CHEBI:61381"/>
        <dbReference type="EC" id="1.1.1.17"/>
    </reaction>
</comment>
<comment type="subunit">
    <text evidence="1">Monomer.</text>
</comment>
<comment type="similarity">
    <text evidence="2">Belongs to the mannitol dehydrogenase family.</text>
</comment>
<comment type="sequence caution" evidence="2">
    <conflict type="erroneous gene model prediction">
        <sequence resource="EMBL-CDS" id="EEA21000"/>
    </conflict>
</comment>
<organism>
    <name type="scientific">Talaromyces marneffei (strain ATCC 18224 / CBS 334.59 / QM 7333)</name>
    <name type="common">Penicillium marneffei</name>
    <dbReference type="NCBI Taxonomy" id="441960"/>
    <lineage>
        <taxon>Eukaryota</taxon>
        <taxon>Fungi</taxon>
        <taxon>Dikarya</taxon>
        <taxon>Ascomycota</taxon>
        <taxon>Pezizomycotina</taxon>
        <taxon>Eurotiomycetes</taxon>
        <taxon>Eurotiomycetidae</taxon>
        <taxon>Eurotiales</taxon>
        <taxon>Trichocomaceae</taxon>
        <taxon>Talaromyces</taxon>
        <taxon>Talaromyces sect. Talaromyces</taxon>
    </lineage>
</organism>
<reference key="1">
    <citation type="journal article" date="2015" name="Genome Announc.">
        <title>Genome sequence of the AIDS-associated pathogen Penicillium marneffei (ATCC18224) and its near taxonomic relative Talaromyces stipitatus (ATCC10500).</title>
        <authorList>
            <person name="Nierman W.C."/>
            <person name="Fedorova-Abrams N.D."/>
            <person name="Andrianopoulos A."/>
        </authorList>
    </citation>
    <scope>NUCLEOTIDE SEQUENCE [LARGE SCALE GENOMIC DNA]</scope>
    <source>
        <strain>ATCC 18224 / CBS 334.59 / QM 7333</strain>
    </source>
</reference>
<keyword id="KW-0520">NAD</keyword>
<keyword id="KW-0560">Oxidoreductase</keyword>
<keyword id="KW-1185">Reference proteome</keyword>
<gene>
    <name type="ORF">PMAA_048060</name>
</gene>
<accession>B6QP49</accession>
<proteinExistence type="inferred from homology"/>
<dbReference type="EC" id="1.1.1.17"/>
<dbReference type="EMBL" id="DS995904">
    <property type="protein sequence ID" value="EEA21000.1"/>
    <property type="status" value="ALT_SEQ"/>
    <property type="molecule type" value="Genomic_DNA"/>
</dbReference>
<dbReference type="RefSeq" id="XP_002152000.1">
    <property type="nucleotide sequence ID" value="XM_002151964.1"/>
</dbReference>
<dbReference type="SMR" id="B6QP49"/>
<dbReference type="STRING" id="441960.B6QP49"/>
<dbReference type="HOGENOM" id="CLU_385507_0_0_1"/>
<dbReference type="OrthoDB" id="4790at28568"/>
<dbReference type="Proteomes" id="UP000001294">
    <property type="component" value="Unassembled WGS sequence"/>
</dbReference>
<dbReference type="GO" id="GO:0005829">
    <property type="term" value="C:cytosol"/>
    <property type="evidence" value="ECO:0007669"/>
    <property type="project" value="TreeGrafter"/>
</dbReference>
<dbReference type="GO" id="GO:0008926">
    <property type="term" value="F:mannitol-1-phosphate 5-dehydrogenase activity"/>
    <property type="evidence" value="ECO:0007669"/>
    <property type="project" value="UniProtKB-EC"/>
</dbReference>
<dbReference type="GO" id="GO:0019592">
    <property type="term" value="P:mannitol catabolic process"/>
    <property type="evidence" value="ECO:0007669"/>
    <property type="project" value="TreeGrafter"/>
</dbReference>
<dbReference type="FunFam" id="1.10.1040.10:FF:000009">
    <property type="entry name" value="Mannitol-1-phosphate 5-dehydrogenase"/>
    <property type="match status" value="1"/>
</dbReference>
<dbReference type="FunFam" id="3.40.50.720:FF:000316">
    <property type="entry name" value="Mannitol-1-phosphate 5-dehydrogenase"/>
    <property type="match status" value="1"/>
</dbReference>
<dbReference type="Gene3D" id="1.10.1040.10">
    <property type="entry name" value="N-(1-d-carboxylethyl)-l-norvaline Dehydrogenase, domain 2"/>
    <property type="match status" value="1"/>
</dbReference>
<dbReference type="Gene3D" id="3.40.50.720">
    <property type="entry name" value="NAD(P)-binding Rossmann-like Domain"/>
    <property type="match status" value="1"/>
</dbReference>
<dbReference type="HAMAP" id="MF_00196">
    <property type="entry name" value="Mannitol_dehydrog"/>
    <property type="match status" value="1"/>
</dbReference>
<dbReference type="InterPro" id="IPR008927">
    <property type="entry name" value="6-PGluconate_DH-like_C_sf"/>
</dbReference>
<dbReference type="InterPro" id="IPR013328">
    <property type="entry name" value="6PGD_dom2"/>
</dbReference>
<dbReference type="InterPro" id="IPR023028">
    <property type="entry name" value="Mannitol_1_phos_5_DH"/>
</dbReference>
<dbReference type="InterPro" id="IPR000669">
    <property type="entry name" value="Mannitol_DH"/>
</dbReference>
<dbReference type="InterPro" id="IPR013118">
    <property type="entry name" value="Mannitol_DH_C"/>
</dbReference>
<dbReference type="InterPro" id="IPR013131">
    <property type="entry name" value="Mannitol_DH_N"/>
</dbReference>
<dbReference type="InterPro" id="IPR036291">
    <property type="entry name" value="NAD(P)-bd_dom_sf"/>
</dbReference>
<dbReference type="NCBIfam" id="NF002652">
    <property type="entry name" value="PRK02318.2-5"/>
    <property type="match status" value="1"/>
</dbReference>
<dbReference type="PANTHER" id="PTHR30524:SF0">
    <property type="entry name" value="ALTRONATE OXIDOREDUCTASE-RELATED"/>
    <property type="match status" value="1"/>
</dbReference>
<dbReference type="PANTHER" id="PTHR30524">
    <property type="entry name" value="MANNITOL-1-PHOSPHATE 5-DEHYDROGENASE"/>
    <property type="match status" value="1"/>
</dbReference>
<dbReference type="Pfam" id="PF01232">
    <property type="entry name" value="Mannitol_dh"/>
    <property type="match status" value="1"/>
</dbReference>
<dbReference type="Pfam" id="PF08125">
    <property type="entry name" value="Mannitol_dh_C"/>
    <property type="match status" value="1"/>
</dbReference>
<dbReference type="PRINTS" id="PR00084">
    <property type="entry name" value="MTLDHDRGNASE"/>
</dbReference>
<dbReference type="SUPFAM" id="SSF48179">
    <property type="entry name" value="6-phosphogluconate dehydrogenase C-terminal domain-like"/>
    <property type="match status" value="1"/>
</dbReference>
<dbReference type="SUPFAM" id="SSF51735">
    <property type="entry name" value="NAD(P)-binding Rossmann-fold domains"/>
    <property type="match status" value="1"/>
</dbReference>